<accession>A4XYL2</accession>
<comment type="function">
    <text evidence="1">An essential GTPase which binds GTP, GDP and possibly (p)ppGpp with moderate affinity, with high nucleotide exchange rates and a fairly low GTP hydrolysis rate. Plays a role in control of the cell cycle, stress response, ribosome biogenesis and in those bacteria that undergo differentiation, in morphogenesis control.</text>
</comment>
<comment type="cofactor">
    <cofactor evidence="1">
        <name>Mg(2+)</name>
        <dbReference type="ChEBI" id="CHEBI:18420"/>
    </cofactor>
</comment>
<comment type="subunit">
    <text evidence="1">Monomer.</text>
</comment>
<comment type="subcellular location">
    <subcellularLocation>
        <location evidence="1">Cytoplasm</location>
    </subcellularLocation>
</comment>
<comment type="similarity">
    <text evidence="1">Belongs to the TRAFAC class OBG-HflX-like GTPase superfamily. OBG GTPase family.</text>
</comment>
<organism>
    <name type="scientific">Ectopseudomonas mendocina (strain ymp)</name>
    <name type="common">Pseudomonas mendocina</name>
    <dbReference type="NCBI Taxonomy" id="399739"/>
    <lineage>
        <taxon>Bacteria</taxon>
        <taxon>Pseudomonadati</taxon>
        <taxon>Pseudomonadota</taxon>
        <taxon>Gammaproteobacteria</taxon>
        <taxon>Pseudomonadales</taxon>
        <taxon>Pseudomonadaceae</taxon>
        <taxon>Ectopseudomonas</taxon>
    </lineage>
</organism>
<keyword id="KW-0963">Cytoplasm</keyword>
<keyword id="KW-0342">GTP-binding</keyword>
<keyword id="KW-0378">Hydrolase</keyword>
<keyword id="KW-0460">Magnesium</keyword>
<keyword id="KW-0479">Metal-binding</keyword>
<keyword id="KW-0547">Nucleotide-binding</keyword>
<dbReference type="EC" id="3.6.5.-" evidence="1"/>
<dbReference type="EMBL" id="CP000680">
    <property type="protein sequence ID" value="ABP86428.1"/>
    <property type="molecule type" value="Genomic_DNA"/>
</dbReference>
<dbReference type="SMR" id="A4XYL2"/>
<dbReference type="STRING" id="399739.Pmen_3680"/>
<dbReference type="KEGG" id="pmy:Pmen_3680"/>
<dbReference type="PATRIC" id="fig|399739.8.peg.3732"/>
<dbReference type="eggNOG" id="COG0536">
    <property type="taxonomic scope" value="Bacteria"/>
</dbReference>
<dbReference type="HOGENOM" id="CLU_011747_2_0_6"/>
<dbReference type="OrthoDB" id="9807318at2"/>
<dbReference type="GO" id="GO:0005737">
    <property type="term" value="C:cytoplasm"/>
    <property type="evidence" value="ECO:0007669"/>
    <property type="project" value="UniProtKB-SubCell"/>
</dbReference>
<dbReference type="GO" id="GO:0005525">
    <property type="term" value="F:GTP binding"/>
    <property type="evidence" value="ECO:0007669"/>
    <property type="project" value="UniProtKB-UniRule"/>
</dbReference>
<dbReference type="GO" id="GO:0003924">
    <property type="term" value="F:GTPase activity"/>
    <property type="evidence" value="ECO:0007669"/>
    <property type="project" value="UniProtKB-UniRule"/>
</dbReference>
<dbReference type="GO" id="GO:0000287">
    <property type="term" value="F:magnesium ion binding"/>
    <property type="evidence" value="ECO:0007669"/>
    <property type="project" value="InterPro"/>
</dbReference>
<dbReference type="GO" id="GO:0042254">
    <property type="term" value="P:ribosome biogenesis"/>
    <property type="evidence" value="ECO:0007669"/>
    <property type="project" value="UniProtKB-UniRule"/>
</dbReference>
<dbReference type="CDD" id="cd01898">
    <property type="entry name" value="Obg"/>
    <property type="match status" value="1"/>
</dbReference>
<dbReference type="FunFam" id="2.70.210.12:FF:000001">
    <property type="entry name" value="GTPase Obg"/>
    <property type="match status" value="1"/>
</dbReference>
<dbReference type="FunFam" id="3.40.50.300:FF:000185">
    <property type="entry name" value="GTPase Obg"/>
    <property type="match status" value="1"/>
</dbReference>
<dbReference type="Gene3D" id="2.70.210.12">
    <property type="entry name" value="GTP1/OBG domain"/>
    <property type="match status" value="1"/>
</dbReference>
<dbReference type="Gene3D" id="3.40.50.300">
    <property type="entry name" value="P-loop containing nucleotide triphosphate hydrolases"/>
    <property type="match status" value="1"/>
</dbReference>
<dbReference type="HAMAP" id="MF_01454">
    <property type="entry name" value="GTPase_Obg"/>
    <property type="match status" value="1"/>
</dbReference>
<dbReference type="InterPro" id="IPR031167">
    <property type="entry name" value="G_OBG"/>
</dbReference>
<dbReference type="InterPro" id="IPR006073">
    <property type="entry name" value="GTP-bd"/>
</dbReference>
<dbReference type="InterPro" id="IPR014100">
    <property type="entry name" value="GTP-bd_Obg/CgtA"/>
</dbReference>
<dbReference type="InterPro" id="IPR006074">
    <property type="entry name" value="GTP1-OBG_CS"/>
</dbReference>
<dbReference type="InterPro" id="IPR006169">
    <property type="entry name" value="GTP1_OBG_dom"/>
</dbReference>
<dbReference type="InterPro" id="IPR036726">
    <property type="entry name" value="GTP1_OBG_dom_sf"/>
</dbReference>
<dbReference type="InterPro" id="IPR045086">
    <property type="entry name" value="OBG_GTPase"/>
</dbReference>
<dbReference type="InterPro" id="IPR027417">
    <property type="entry name" value="P-loop_NTPase"/>
</dbReference>
<dbReference type="NCBIfam" id="TIGR02729">
    <property type="entry name" value="Obg_CgtA"/>
    <property type="match status" value="1"/>
</dbReference>
<dbReference type="NCBIfam" id="NF008955">
    <property type="entry name" value="PRK12297.1"/>
    <property type="match status" value="1"/>
</dbReference>
<dbReference type="NCBIfam" id="NF008956">
    <property type="entry name" value="PRK12299.1"/>
    <property type="match status" value="1"/>
</dbReference>
<dbReference type="PANTHER" id="PTHR11702">
    <property type="entry name" value="DEVELOPMENTALLY REGULATED GTP-BINDING PROTEIN-RELATED"/>
    <property type="match status" value="1"/>
</dbReference>
<dbReference type="PANTHER" id="PTHR11702:SF31">
    <property type="entry name" value="MITOCHONDRIAL RIBOSOME-ASSOCIATED GTPASE 2"/>
    <property type="match status" value="1"/>
</dbReference>
<dbReference type="Pfam" id="PF01018">
    <property type="entry name" value="GTP1_OBG"/>
    <property type="match status" value="1"/>
</dbReference>
<dbReference type="Pfam" id="PF01926">
    <property type="entry name" value="MMR_HSR1"/>
    <property type="match status" value="1"/>
</dbReference>
<dbReference type="PIRSF" id="PIRSF002401">
    <property type="entry name" value="GTP_bd_Obg/CgtA"/>
    <property type="match status" value="1"/>
</dbReference>
<dbReference type="PRINTS" id="PR00326">
    <property type="entry name" value="GTP1OBG"/>
</dbReference>
<dbReference type="SUPFAM" id="SSF82051">
    <property type="entry name" value="Obg GTP-binding protein N-terminal domain"/>
    <property type="match status" value="1"/>
</dbReference>
<dbReference type="SUPFAM" id="SSF52540">
    <property type="entry name" value="P-loop containing nucleoside triphosphate hydrolases"/>
    <property type="match status" value="1"/>
</dbReference>
<dbReference type="PROSITE" id="PS51710">
    <property type="entry name" value="G_OBG"/>
    <property type="match status" value="1"/>
</dbReference>
<dbReference type="PROSITE" id="PS00905">
    <property type="entry name" value="GTP1_OBG"/>
    <property type="match status" value="1"/>
</dbReference>
<dbReference type="PROSITE" id="PS51883">
    <property type="entry name" value="OBG"/>
    <property type="match status" value="1"/>
</dbReference>
<gene>
    <name evidence="1" type="primary">obg</name>
    <name type="ordered locus">Pmen_3680</name>
</gene>
<protein>
    <recommendedName>
        <fullName evidence="1">GTPase Obg</fullName>
        <ecNumber evidence="1">3.6.5.-</ecNumber>
    </recommendedName>
    <alternativeName>
        <fullName evidence="1">GTP-binding protein Obg</fullName>
    </alternativeName>
</protein>
<feature type="chain" id="PRO_0000386157" description="GTPase Obg">
    <location>
        <begin position="1"/>
        <end position="406"/>
    </location>
</feature>
<feature type="domain" description="Obg" evidence="2">
    <location>
        <begin position="1"/>
        <end position="159"/>
    </location>
</feature>
<feature type="domain" description="OBG-type G" evidence="1">
    <location>
        <begin position="160"/>
        <end position="333"/>
    </location>
</feature>
<feature type="region of interest" description="Disordered" evidence="3">
    <location>
        <begin position="126"/>
        <end position="149"/>
    </location>
</feature>
<feature type="region of interest" description="Disordered" evidence="3">
    <location>
        <begin position="376"/>
        <end position="406"/>
    </location>
</feature>
<feature type="compositionally biased region" description="Polar residues" evidence="3">
    <location>
        <begin position="129"/>
        <end position="143"/>
    </location>
</feature>
<feature type="compositionally biased region" description="Acidic residues" evidence="3">
    <location>
        <begin position="383"/>
        <end position="399"/>
    </location>
</feature>
<feature type="binding site" evidence="1">
    <location>
        <begin position="166"/>
        <end position="173"/>
    </location>
    <ligand>
        <name>GTP</name>
        <dbReference type="ChEBI" id="CHEBI:37565"/>
    </ligand>
</feature>
<feature type="binding site" evidence="1">
    <location>
        <position position="173"/>
    </location>
    <ligand>
        <name>Mg(2+)</name>
        <dbReference type="ChEBI" id="CHEBI:18420"/>
    </ligand>
</feature>
<feature type="binding site" evidence="1">
    <location>
        <begin position="191"/>
        <end position="195"/>
    </location>
    <ligand>
        <name>GTP</name>
        <dbReference type="ChEBI" id="CHEBI:37565"/>
    </ligand>
</feature>
<feature type="binding site" evidence="1">
    <location>
        <position position="193"/>
    </location>
    <ligand>
        <name>Mg(2+)</name>
        <dbReference type="ChEBI" id="CHEBI:18420"/>
    </ligand>
</feature>
<feature type="binding site" evidence="1">
    <location>
        <begin position="213"/>
        <end position="216"/>
    </location>
    <ligand>
        <name>GTP</name>
        <dbReference type="ChEBI" id="CHEBI:37565"/>
    </ligand>
</feature>
<feature type="binding site" evidence="1">
    <location>
        <begin position="283"/>
        <end position="286"/>
    </location>
    <ligand>
        <name>GTP</name>
        <dbReference type="ChEBI" id="CHEBI:37565"/>
    </ligand>
</feature>
<feature type="binding site" evidence="1">
    <location>
        <begin position="314"/>
        <end position="316"/>
    </location>
    <ligand>
        <name>GTP</name>
        <dbReference type="ChEBI" id="CHEBI:37565"/>
    </ligand>
</feature>
<name>OBG_ECTM1</name>
<sequence>MKFVDEVSIFVKAGDGGNGMMSFRREKFIEKGGPNGGDGGDGGSVFLEADENLNTLIDYRYTRKFHAQNGEKGGSTDCTGAKGEDLILPVPVGTTVIDVATQEVIGDLVKPGQRLMVAQGGWHGLGNTRFKSSTNRAPRQTTPGKPGESRDLKLELKVLADVGLLGLPNAGKSTFIRAVSAAKPKVADYPFTTLVPNLGVVSVDRFKSFVVADIPGLIEGASEGAGLGIRFLKHLARTRLLLHLVDMAPLDESDPAEAAQVIIDELGRFSPALAERDRWLVLNKMDQIPEDEREARKADIVARLGWQGPVYVVSAISRDGTERICRDIMHYLEVRAERIAEDPVFAEELAELDQRIEDEARARLQALDDQRALRKSGVRSVDDIDEDDDFFDDEDDDGPEIIYVRD</sequence>
<evidence type="ECO:0000255" key="1">
    <source>
        <dbReference type="HAMAP-Rule" id="MF_01454"/>
    </source>
</evidence>
<evidence type="ECO:0000255" key="2">
    <source>
        <dbReference type="PROSITE-ProRule" id="PRU01231"/>
    </source>
</evidence>
<evidence type="ECO:0000256" key="3">
    <source>
        <dbReference type="SAM" id="MobiDB-lite"/>
    </source>
</evidence>
<proteinExistence type="inferred from homology"/>
<reference key="1">
    <citation type="submission" date="2007-04" db="EMBL/GenBank/DDBJ databases">
        <title>Complete sequence of Pseudomonas mendocina ymp.</title>
        <authorList>
            <consortium name="US DOE Joint Genome Institute"/>
            <person name="Copeland A."/>
            <person name="Lucas S."/>
            <person name="Lapidus A."/>
            <person name="Barry K."/>
            <person name="Glavina del Rio T."/>
            <person name="Dalin E."/>
            <person name="Tice H."/>
            <person name="Pitluck S."/>
            <person name="Kiss H."/>
            <person name="Brettin T."/>
            <person name="Detter J.C."/>
            <person name="Bruce D."/>
            <person name="Han C."/>
            <person name="Schmutz J."/>
            <person name="Larimer F."/>
            <person name="Land M."/>
            <person name="Hauser L."/>
            <person name="Kyrpides N."/>
            <person name="Mikhailova N."/>
            <person name="Hersman L."/>
            <person name="Dubois J."/>
            <person name="Maurice P."/>
            <person name="Richardson P."/>
        </authorList>
    </citation>
    <scope>NUCLEOTIDE SEQUENCE [LARGE SCALE GENOMIC DNA]</scope>
    <source>
        <strain>ymp</strain>
    </source>
</reference>